<name>GATB_CORDI</name>
<sequence>MTAAMYDLMDYDEVLEKFDPVMGLEVHVELATETKMFSAPSAHFGAEPNSNVDPVSLGLPGALPVVNAKGVEWAIKIGLALNCKIAESSRFARKNYFYPDQPKNYQISQYDEPIAYDGYLDVVLDDGTPWRVEIERAHMEEDTGKLTHLGGADGRIHGATASLVDCNRAGIPLIEIVTKPIEGAGERAPEVARAYVGALRDLVKALGVSDARMDQGSMRCDANVSLRPVGTVEFGTRTETKNINSLKSVEQAVRYEMQRQAQVLEDGGEIVQETRHYQETDGSTSKGRPKETAEDYRYFNDPDLPPVIAPKEWVEEIRATLPELPWIRRARIQKEWGLKDEEMRDLVNAGALDLIVETVEAGASASEARSWWVAYLSQKANESGVELDSLSITPQQVARVAALVKEGKLTNKLARQAVDGVLAGEGDVDEVVAARGLEVVRDDGAIEKAVDEALAANPDIVEKYKAGNTKVTGAIVGAVMKATRGKADPAQVNKLIAEKLA</sequence>
<protein>
    <recommendedName>
        <fullName evidence="1">Aspartyl/glutamyl-tRNA(Asn/Gln) amidotransferase subunit B</fullName>
        <shortName evidence="1">Asp/Glu-ADT subunit B</shortName>
        <ecNumber evidence="1">6.3.5.-</ecNumber>
    </recommendedName>
</protein>
<accession>P61342</accession>
<dbReference type="EC" id="6.3.5.-" evidence="1"/>
<dbReference type="EMBL" id="BX248357">
    <property type="protein sequence ID" value="CAE49612.1"/>
    <property type="molecule type" value="Genomic_DNA"/>
</dbReference>
<dbReference type="RefSeq" id="WP_003851164.1">
    <property type="nucleotide sequence ID" value="NC_002935.2"/>
</dbReference>
<dbReference type="SMR" id="P61342"/>
<dbReference type="STRING" id="257309.DIP1089"/>
<dbReference type="GeneID" id="29421973"/>
<dbReference type="KEGG" id="cdi:DIP1089"/>
<dbReference type="HOGENOM" id="CLU_019240_0_0_11"/>
<dbReference type="Proteomes" id="UP000002198">
    <property type="component" value="Chromosome"/>
</dbReference>
<dbReference type="GO" id="GO:0050566">
    <property type="term" value="F:asparaginyl-tRNA synthase (glutamine-hydrolyzing) activity"/>
    <property type="evidence" value="ECO:0007669"/>
    <property type="project" value="RHEA"/>
</dbReference>
<dbReference type="GO" id="GO:0005524">
    <property type="term" value="F:ATP binding"/>
    <property type="evidence" value="ECO:0007669"/>
    <property type="project" value="UniProtKB-KW"/>
</dbReference>
<dbReference type="GO" id="GO:0050567">
    <property type="term" value="F:glutaminyl-tRNA synthase (glutamine-hydrolyzing) activity"/>
    <property type="evidence" value="ECO:0007669"/>
    <property type="project" value="UniProtKB-UniRule"/>
</dbReference>
<dbReference type="GO" id="GO:0070681">
    <property type="term" value="P:glutaminyl-tRNAGln biosynthesis via transamidation"/>
    <property type="evidence" value="ECO:0007669"/>
    <property type="project" value="TreeGrafter"/>
</dbReference>
<dbReference type="GO" id="GO:0006412">
    <property type="term" value="P:translation"/>
    <property type="evidence" value="ECO:0007669"/>
    <property type="project" value="UniProtKB-UniRule"/>
</dbReference>
<dbReference type="FunFam" id="1.10.10.410:FF:000001">
    <property type="entry name" value="Aspartyl/glutamyl-tRNA(Asn/Gln) amidotransferase subunit B"/>
    <property type="match status" value="1"/>
</dbReference>
<dbReference type="Gene3D" id="1.10.10.410">
    <property type="match status" value="1"/>
</dbReference>
<dbReference type="HAMAP" id="MF_00121">
    <property type="entry name" value="GatB"/>
    <property type="match status" value="1"/>
</dbReference>
<dbReference type="InterPro" id="IPR017959">
    <property type="entry name" value="Asn/Gln-tRNA_amidoTrfase_suB/E"/>
</dbReference>
<dbReference type="InterPro" id="IPR006075">
    <property type="entry name" value="Asn/Gln-tRNA_Trfase_suB/E_cat"/>
</dbReference>
<dbReference type="InterPro" id="IPR018027">
    <property type="entry name" value="Asn/Gln_amidotransferase"/>
</dbReference>
<dbReference type="InterPro" id="IPR003789">
    <property type="entry name" value="Asn/Gln_tRNA_amidoTrase-B-like"/>
</dbReference>
<dbReference type="InterPro" id="IPR004413">
    <property type="entry name" value="GatB"/>
</dbReference>
<dbReference type="InterPro" id="IPR023168">
    <property type="entry name" value="GatB_Yqey_C_2"/>
</dbReference>
<dbReference type="InterPro" id="IPR017958">
    <property type="entry name" value="Gln-tRNA_amidoTrfase_suB_CS"/>
</dbReference>
<dbReference type="InterPro" id="IPR014746">
    <property type="entry name" value="Gln_synth/guanido_kin_cat_dom"/>
</dbReference>
<dbReference type="NCBIfam" id="TIGR00133">
    <property type="entry name" value="gatB"/>
    <property type="match status" value="1"/>
</dbReference>
<dbReference type="NCBIfam" id="NF004012">
    <property type="entry name" value="PRK05477.1-2"/>
    <property type="match status" value="1"/>
</dbReference>
<dbReference type="NCBIfam" id="NF004013">
    <property type="entry name" value="PRK05477.1-3"/>
    <property type="match status" value="1"/>
</dbReference>
<dbReference type="NCBIfam" id="NF004014">
    <property type="entry name" value="PRK05477.1-4"/>
    <property type="match status" value="1"/>
</dbReference>
<dbReference type="PANTHER" id="PTHR11659">
    <property type="entry name" value="GLUTAMYL-TRNA GLN AMIDOTRANSFERASE SUBUNIT B MITOCHONDRIAL AND PROKARYOTIC PET112-RELATED"/>
    <property type="match status" value="1"/>
</dbReference>
<dbReference type="PANTHER" id="PTHR11659:SF0">
    <property type="entry name" value="GLUTAMYL-TRNA(GLN) AMIDOTRANSFERASE SUBUNIT B, MITOCHONDRIAL"/>
    <property type="match status" value="1"/>
</dbReference>
<dbReference type="Pfam" id="PF02934">
    <property type="entry name" value="GatB_N"/>
    <property type="match status" value="1"/>
</dbReference>
<dbReference type="Pfam" id="PF02637">
    <property type="entry name" value="GatB_Yqey"/>
    <property type="match status" value="1"/>
</dbReference>
<dbReference type="SMART" id="SM00845">
    <property type="entry name" value="GatB_Yqey"/>
    <property type="match status" value="1"/>
</dbReference>
<dbReference type="SUPFAM" id="SSF89095">
    <property type="entry name" value="GatB/YqeY motif"/>
    <property type="match status" value="1"/>
</dbReference>
<dbReference type="SUPFAM" id="SSF55931">
    <property type="entry name" value="Glutamine synthetase/guanido kinase"/>
    <property type="match status" value="1"/>
</dbReference>
<dbReference type="PROSITE" id="PS01234">
    <property type="entry name" value="GATB"/>
    <property type="match status" value="1"/>
</dbReference>
<reference key="1">
    <citation type="journal article" date="2003" name="Nucleic Acids Res.">
        <title>The complete genome sequence and analysis of Corynebacterium diphtheriae NCTC13129.</title>
        <authorList>
            <person name="Cerdeno-Tarraga A.-M."/>
            <person name="Efstratiou A."/>
            <person name="Dover L.G."/>
            <person name="Holden M.T.G."/>
            <person name="Pallen M.J."/>
            <person name="Bentley S.D."/>
            <person name="Besra G.S."/>
            <person name="Churcher C.M."/>
            <person name="James K.D."/>
            <person name="De Zoysa A."/>
            <person name="Chillingworth T."/>
            <person name="Cronin A."/>
            <person name="Dowd L."/>
            <person name="Feltwell T."/>
            <person name="Hamlin N."/>
            <person name="Holroyd S."/>
            <person name="Jagels K."/>
            <person name="Moule S."/>
            <person name="Quail M.A."/>
            <person name="Rabbinowitsch E."/>
            <person name="Rutherford K.M."/>
            <person name="Thomson N.R."/>
            <person name="Unwin L."/>
            <person name="Whitehead S."/>
            <person name="Barrell B.G."/>
            <person name="Parkhill J."/>
        </authorList>
    </citation>
    <scope>NUCLEOTIDE SEQUENCE [LARGE SCALE GENOMIC DNA]</scope>
    <source>
        <strain>ATCC 700971 / NCTC 13129 / Biotype gravis</strain>
    </source>
</reference>
<organism>
    <name type="scientific">Corynebacterium diphtheriae (strain ATCC 700971 / NCTC 13129 / Biotype gravis)</name>
    <dbReference type="NCBI Taxonomy" id="257309"/>
    <lineage>
        <taxon>Bacteria</taxon>
        <taxon>Bacillati</taxon>
        <taxon>Actinomycetota</taxon>
        <taxon>Actinomycetes</taxon>
        <taxon>Mycobacteriales</taxon>
        <taxon>Corynebacteriaceae</taxon>
        <taxon>Corynebacterium</taxon>
    </lineage>
</organism>
<feature type="chain" id="PRO_0000148784" description="Aspartyl/glutamyl-tRNA(Asn/Gln) amidotransferase subunit B">
    <location>
        <begin position="1"/>
        <end position="501"/>
    </location>
</feature>
<feature type="region of interest" description="Disordered" evidence="2">
    <location>
        <begin position="271"/>
        <end position="299"/>
    </location>
</feature>
<feature type="compositionally biased region" description="Basic and acidic residues" evidence="2">
    <location>
        <begin position="288"/>
        <end position="299"/>
    </location>
</feature>
<comment type="function">
    <text evidence="1">Allows the formation of correctly charged Asn-tRNA(Asn) or Gln-tRNA(Gln) through the transamidation of misacylated Asp-tRNA(Asn) or Glu-tRNA(Gln) in organisms which lack either or both of asparaginyl-tRNA or glutaminyl-tRNA synthetases. The reaction takes place in the presence of glutamine and ATP through an activated phospho-Asp-tRNA(Asn) or phospho-Glu-tRNA(Gln).</text>
</comment>
<comment type="catalytic activity">
    <reaction evidence="1">
        <text>L-glutamyl-tRNA(Gln) + L-glutamine + ATP + H2O = L-glutaminyl-tRNA(Gln) + L-glutamate + ADP + phosphate + H(+)</text>
        <dbReference type="Rhea" id="RHEA:17521"/>
        <dbReference type="Rhea" id="RHEA-COMP:9681"/>
        <dbReference type="Rhea" id="RHEA-COMP:9684"/>
        <dbReference type="ChEBI" id="CHEBI:15377"/>
        <dbReference type="ChEBI" id="CHEBI:15378"/>
        <dbReference type="ChEBI" id="CHEBI:29985"/>
        <dbReference type="ChEBI" id="CHEBI:30616"/>
        <dbReference type="ChEBI" id="CHEBI:43474"/>
        <dbReference type="ChEBI" id="CHEBI:58359"/>
        <dbReference type="ChEBI" id="CHEBI:78520"/>
        <dbReference type="ChEBI" id="CHEBI:78521"/>
        <dbReference type="ChEBI" id="CHEBI:456216"/>
    </reaction>
</comment>
<comment type="catalytic activity">
    <reaction evidence="1">
        <text>L-aspartyl-tRNA(Asn) + L-glutamine + ATP + H2O = L-asparaginyl-tRNA(Asn) + L-glutamate + ADP + phosphate + 2 H(+)</text>
        <dbReference type="Rhea" id="RHEA:14513"/>
        <dbReference type="Rhea" id="RHEA-COMP:9674"/>
        <dbReference type="Rhea" id="RHEA-COMP:9677"/>
        <dbReference type="ChEBI" id="CHEBI:15377"/>
        <dbReference type="ChEBI" id="CHEBI:15378"/>
        <dbReference type="ChEBI" id="CHEBI:29985"/>
        <dbReference type="ChEBI" id="CHEBI:30616"/>
        <dbReference type="ChEBI" id="CHEBI:43474"/>
        <dbReference type="ChEBI" id="CHEBI:58359"/>
        <dbReference type="ChEBI" id="CHEBI:78515"/>
        <dbReference type="ChEBI" id="CHEBI:78516"/>
        <dbReference type="ChEBI" id="CHEBI:456216"/>
    </reaction>
</comment>
<comment type="subunit">
    <text evidence="1">Heterotrimer of A, B and C subunits.</text>
</comment>
<comment type="similarity">
    <text evidence="1">Belongs to the GatB/GatE family. GatB subfamily.</text>
</comment>
<gene>
    <name evidence="1" type="primary">gatB</name>
    <name type="ordered locus">DIP1089</name>
</gene>
<evidence type="ECO:0000255" key="1">
    <source>
        <dbReference type="HAMAP-Rule" id="MF_00121"/>
    </source>
</evidence>
<evidence type="ECO:0000256" key="2">
    <source>
        <dbReference type="SAM" id="MobiDB-lite"/>
    </source>
</evidence>
<keyword id="KW-0067">ATP-binding</keyword>
<keyword id="KW-0436">Ligase</keyword>
<keyword id="KW-0547">Nucleotide-binding</keyword>
<keyword id="KW-0648">Protein biosynthesis</keyword>
<keyword id="KW-1185">Reference proteome</keyword>
<proteinExistence type="inferred from homology"/>